<name>SEN15_SCHPO</name>
<protein>
    <recommendedName>
        <fullName>Probable tRNA-splicing endonuclease subunit sen15</fullName>
    </recommendedName>
    <alternativeName>
        <fullName>tRNA-intron endonuclease sen15</fullName>
    </alternativeName>
</protein>
<accession>Q7LKV3</accession>
<dbReference type="EMBL" id="CU329670">
    <property type="protein sequence ID" value="CAE46913.1"/>
    <property type="molecule type" value="Genomic_DNA"/>
</dbReference>
<dbReference type="RefSeq" id="NP_001018260.1">
    <property type="nucleotide sequence ID" value="NM_001019595.2"/>
</dbReference>
<dbReference type="SMR" id="Q7LKV3"/>
<dbReference type="BioGRID" id="280542">
    <property type="interactions" value="4"/>
</dbReference>
<dbReference type="FunCoup" id="Q7LKV3">
    <property type="interactions" value="2"/>
</dbReference>
<dbReference type="STRING" id="284812.Q7LKV3"/>
<dbReference type="PaxDb" id="4896-SPAC959.10.1"/>
<dbReference type="EnsemblFungi" id="SPAC959.10.1">
    <property type="protein sequence ID" value="SPAC959.10.1:pep"/>
    <property type="gene ID" value="SPAC959.10"/>
</dbReference>
<dbReference type="GeneID" id="3361466"/>
<dbReference type="KEGG" id="spo:3361466"/>
<dbReference type="PomBase" id="SPAC959.10">
    <property type="gene designation" value="sen15"/>
</dbReference>
<dbReference type="VEuPathDB" id="FungiDB:SPAC959.10"/>
<dbReference type="eggNOG" id="ENOG502SC4F">
    <property type="taxonomic scope" value="Eukaryota"/>
</dbReference>
<dbReference type="HOGENOM" id="CLU_083361_2_0_1"/>
<dbReference type="InParanoid" id="Q7LKV3"/>
<dbReference type="OMA" id="MKPRQND"/>
<dbReference type="PhylomeDB" id="Q7LKV3"/>
<dbReference type="PRO" id="PR:Q7LKV3"/>
<dbReference type="Proteomes" id="UP000002485">
    <property type="component" value="Chromosome I"/>
</dbReference>
<dbReference type="GO" id="GO:0005829">
    <property type="term" value="C:cytosol"/>
    <property type="evidence" value="ECO:0007005"/>
    <property type="project" value="PomBase"/>
</dbReference>
<dbReference type="GO" id="GO:0005634">
    <property type="term" value="C:nucleus"/>
    <property type="evidence" value="ECO:0007005"/>
    <property type="project" value="PomBase"/>
</dbReference>
<dbReference type="GO" id="GO:0000214">
    <property type="term" value="C:tRNA-intron endonuclease complex"/>
    <property type="evidence" value="ECO:0000318"/>
    <property type="project" value="GO_Central"/>
</dbReference>
<dbReference type="GO" id="GO:0003676">
    <property type="term" value="F:nucleic acid binding"/>
    <property type="evidence" value="ECO:0007669"/>
    <property type="project" value="InterPro"/>
</dbReference>
<dbReference type="GO" id="GO:0000379">
    <property type="term" value="P:tRNA-type intron splice site recognition and cleavage"/>
    <property type="evidence" value="ECO:0000318"/>
    <property type="project" value="GO_Central"/>
</dbReference>
<dbReference type="Gene3D" id="3.40.1350.10">
    <property type="match status" value="1"/>
</dbReference>
<dbReference type="InterPro" id="IPR042777">
    <property type="entry name" value="Sen15_fungi"/>
</dbReference>
<dbReference type="InterPro" id="IPR018593">
    <property type="entry name" value="tRNA-endonuc_su_Sen15"/>
</dbReference>
<dbReference type="InterPro" id="IPR011856">
    <property type="entry name" value="tRNA_endonuc-like_dom_sf"/>
</dbReference>
<dbReference type="InterPro" id="IPR036167">
    <property type="entry name" value="tRNA_intron_Endo_cat-like_sf"/>
</dbReference>
<dbReference type="PANTHER" id="PTHR28518">
    <property type="entry name" value="TRNA-SPLICING ENDONUCLEASE SUBUNIT SEN15"/>
    <property type="match status" value="1"/>
</dbReference>
<dbReference type="PANTHER" id="PTHR28518:SF1">
    <property type="entry name" value="TRNA-SPLICING ENDONUCLEASE SUBUNIT SEN15"/>
    <property type="match status" value="1"/>
</dbReference>
<dbReference type="Pfam" id="PF09631">
    <property type="entry name" value="Sen15"/>
    <property type="match status" value="1"/>
</dbReference>
<dbReference type="SUPFAM" id="SSF53032">
    <property type="entry name" value="tRNA-intron endonuclease catalytic domain-like"/>
    <property type="match status" value="1"/>
</dbReference>
<proteinExistence type="inferred from homology"/>
<evidence type="ECO:0000250" key="1"/>
<evidence type="ECO:0000305" key="2"/>
<keyword id="KW-1185">Reference proteome</keyword>
<keyword id="KW-0819">tRNA processing</keyword>
<reference key="1">
    <citation type="journal article" date="2002" name="Nature">
        <title>The genome sequence of Schizosaccharomyces pombe.</title>
        <authorList>
            <person name="Wood V."/>
            <person name="Gwilliam R."/>
            <person name="Rajandream M.A."/>
            <person name="Lyne M.H."/>
            <person name="Lyne R."/>
            <person name="Stewart A."/>
            <person name="Sgouros J.G."/>
            <person name="Peat N."/>
            <person name="Hayles J."/>
            <person name="Baker S.G."/>
            <person name="Basham D."/>
            <person name="Bowman S."/>
            <person name="Brooks K."/>
            <person name="Brown D."/>
            <person name="Brown S."/>
            <person name="Chillingworth T."/>
            <person name="Churcher C.M."/>
            <person name="Collins M."/>
            <person name="Connor R."/>
            <person name="Cronin A."/>
            <person name="Davis P."/>
            <person name="Feltwell T."/>
            <person name="Fraser A."/>
            <person name="Gentles S."/>
            <person name="Goble A."/>
            <person name="Hamlin N."/>
            <person name="Harris D.E."/>
            <person name="Hidalgo J."/>
            <person name="Hodgson G."/>
            <person name="Holroyd S."/>
            <person name="Hornsby T."/>
            <person name="Howarth S."/>
            <person name="Huckle E.J."/>
            <person name="Hunt S."/>
            <person name="Jagels K."/>
            <person name="James K.D."/>
            <person name="Jones L."/>
            <person name="Jones M."/>
            <person name="Leather S."/>
            <person name="McDonald S."/>
            <person name="McLean J."/>
            <person name="Mooney P."/>
            <person name="Moule S."/>
            <person name="Mungall K.L."/>
            <person name="Murphy L.D."/>
            <person name="Niblett D."/>
            <person name="Odell C."/>
            <person name="Oliver K."/>
            <person name="O'Neil S."/>
            <person name="Pearson D."/>
            <person name="Quail M.A."/>
            <person name="Rabbinowitsch E."/>
            <person name="Rutherford K.M."/>
            <person name="Rutter S."/>
            <person name="Saunders D."/>
            <person name="Seeger K."/>
            <person name="Sharp S."/>
            <person name="Skelton J."/>
            <person name="Simmonds M.N."/>
            <person name="Squares R."/>
            <person name="Squares S."/>
            <person name="Stevens K."/>
            <person name="Taylor K."/>
            <person name="Taylor R.G."/>
            <person name="Tivey A."/>
            <person name="Walsh S.V."/>
            <person name="Warren T."/>
            <person name="Whitehead S."/>
            <person name="Woodward J.R."/>
            <person name="Volckaert G."/>
            <person name="Aert R."/>
            <person name="Robben J."/>
            <person name="Grymonprez B."/>
            <person name="Weltjens I."/>
            <person name="Vanstreels E."/>
            <person name="Rieger M."/>
            <person name="Schaefer M."/>
            <person name="Mueller-Auer S."/>
            <person name="Gabel C."/>
            <person name="Fuchs M."/>
            <person name="Duesterhoeft A."/>
            <person name="Fritzc C."/>
            <person name="Holzer E."/>
            <person name="Moestl D."/>
            <person name="Hilbert H."/>
            <person name="Borzym K."/>
            <person name="Langer I."/>
            <person name="Beck A."/>
            <person name="Lehrach H."/>
            <person name="Reinhardt R."/>
            <person name="Pohl T.M."/>
            <person name="Eger P."/>
            <person name="Zimmermann W."/>
            <person name="Wedler H."/>
            <person name="Wambutt R."/>
            <person name="Purnelle B."/>
            <person name="Goffeau A."/>
            <person name="Cadieu E."/>
            <person name="Dreano S."/>
            <person name="Gloux S."/>
            <person name="Lelaure V."/>
            <person name="Mottier S."/>
            <person name="Galibert F."/>
            <person name="Aves S.J."/>
            <person name="Xiang Z."/>
            <person name="Hunt C."/>
            <person name="Moore K."/>
            <person name="Hurst S.M."/>
            <person name="Lucas M."/>
            <person name="Rochet M."/>
            <person name="Gaillardin C."/>
            <person name="Tallada V.A."/>
            <person name="Garzon A."/>
            <person name="Thode G."/>
            <person name="Daga R.R."/>
            <person name="Cruzado L."/>
            <person name="Jimenez J."/>
            <person name="Sanchez M."/>
            <person name="del Rey F."/>
            <person name="Benito J."/>
            <person name="Dominguez A."/>
            <person name="Revuelta J.L."/>
            <person name="Moreno S."/>
            <person name="Armstrong J."/>
            <person name="Forsburg S.L."/>
            <person name="Cerutti L."/>
            <person name="Lowe T."/>
            <person name="McCombie W.R."/>
            <person name="Paulsen I."/>
            <person name="Potashkin J."/>
            <person name="Shpakovski G.V."/>
            <person name="Ussery D."/>
            <person name="Barrell B.G."/>
            <person name="Nurse P."/>
        </authorList>
    </citation>
    <scope>NUCLEOTIDE SEQUENCE [LARGE SCALE GENOMIC DNA]</scope>
    <source>
        <strain>972 / ATCC 24843</strain>
    </source>
</reference>
<gene>
    <name type="primary">sen15</name>
    <name type="ORF">SPAC959.10</name>
</gene>
<organism>
    <name type="scientific">Schizosaccharomyces pombe (strain 972 / ATCC 24843)</name>
    <name type="common">Fission yeast</name>
    <dbReference type="NCBI Taxonomy" id="284812"/>
    <lineage>
        <taxon>Eukaryota</taxon>
        <taxon>Fungi</taxon>
        <taxon>Dikarya</taxon>
        <taxon>Ascomycota</taxon>
        <taxon>Taphrinomycotina</taxon>
        <taxon>Schizosaccharomycetes</taxon>
        <taxon>Schizosaccharomycetales</taxon>
        <taxon>Schizosaccharomycetaceae</taxon>
        <taxon>Schizosaccharomyces</taxon>
    </lineage>
</organism>
<sequence length="143" mass="16467">MQHNTFLPNDAVEEQKQNPYYGILRAVETDLRLGQRWCELKVHVLDIDLKTKRPLLSGIPVNGQLKDKLQYVLPLYLQETISIEFLSSVFDSMKKLSLPLVKDARGLSGDEFFLYLGIMCSDSTIVYYKITDGLIKPRQNDEE</sequence>
<comment type="function">
    <text evidence="1">Non-catalytic subunit of the tRNA-splicing endonuclease complex, a complex responsible for identification and cleavage of the splice sites in pre-tRNA. It cleaves pre-tRNA at the 5' and 3' splice sites to release the intron. The products are an intron and two tRNA half-molecules bearing 2',3' cyclic phosphate and 5'-OH termini. There are no conserved sequences at the splice sites, but the intron is invariably located at the same site in the gene, placing the splice sites an invariant distance from the constant structural features of the tRNA body (By similarity).</text>
</comment>
<comment type="subunit">
    <text evidence="1">tRNA splicing endonuclease is a heterotetramer composed of sen2, sen15, sen34 and sen54. Interacts directly with sen34 (By similarity).</text>
</comment>
<comment type="similarity">
    <text evidence="2">Belongs to the SEN15 family.</text>
</comment>
<feature type="chain" id="PRO_0000194027" description="Probable tRNA-splicing endonuclease subunit sen15">
    <location>
        <begin position="1"/>
        <end position="143"/>
    </location>
</feature>